<proteinExistence type="inferred from homology"/>
<organism>
    <name type="scientific">Bacillus anthracis (strain A0248)</name>
    <dbReference type="NCBI Taxonomy" id="592021"/>
    <lineage>
        <taxon>Bacteria</taxon>
        <taxon>Bacillati</taxon>
        <taxon>Bacillota</taxon>
        <taxon>Bacilli</taxon>
        <taxon>Bacillales</taxon>
        <taxon>Bacillaceae</taxon>
        <taxon>Bacillus</taxon>
        <taxon>Bacillus cereus group</taxon>
    </lineage>
</organism>
<accession>C3P929</accession>
<reference key="1">
    <citation type="submission" date="2009-04" db="EMBL/GenBank/DDBJ databases">
        <title>Genome sequence of Bacillus anthracis A0248.</title>
        <authorList>
            <person name="Dodson R.J."/>
            <person name="Munk A.C."/>
            <person name="Bruce D."/>
            <person name="Detter C."/>
            <person name="Tapia R."/>
            <person name="Sutton G."/>
            <person name="Sims D."/>
            <person name="Brettin T."/>
        </authorList>
    </citation>
    <scope>NUCLEOTIDE SEQUENCE [LARGE SCALE GENOMIC DNA]</scope>
    <source>
        <strain>A0248</strain>
    </source>
</reference>
<dbReference type="EC" id="4.1.1.65" evidence="1"/>
<dbReference type="EMBL" id="CP001598">
    <property type="protein sequence ID" value="ACQ46269.1"/>
    <property type="molecule type" value="Genomic_DNA"/>
</dbReference>
<dbReference type="RefSeq" id="WP_001255013.1">
    <property type="nucleotide sequence ID" value="NC_012659.1"/>
</dbReference>
<dbReference type="SMR" id="C3P929"/>
<dbReference type="GeneID" id="45024215"/>
<dbReference type="KEGG" id="bai:BAA_4583"/>
<dbReference type="HOGENOM" id="CLU_029061_4_0_9"/>
<dbReference type="UniPathway" id="UPA00558">
    <property type="reaction ID" value="UER00616"/>
</dbReference>
<dbReference type="GO" id="GO:0005886">
    <property type="term" value="C:plasma membrane"/>
    <property type="evidence" value="ECO:0007669"/>
    <property type="project" value="UniProtKB-SubCell"/>
</dbReference>
<dbReference type="GO" id="GO:0004609">
    <property type="term" value="F:phosphatidylserine decarboxylase activity"/>
    <property type="evidence" value="ECO:0007669"/>
    <property type="project" value="UniProtKB-UniRule"/>
</dbReference>
<dbReference type="GO" id="GO:0006646">
    <property type="term" value="P:phosphatidylethanolamine biosynthetic process"/>
    <property type="evidence" value="ECO:0007669"/>
    <property type="project" value="UniProtKB-UniRule"/>
</dbReference>
<dbReference type="HAMAP" id="MF_00662">
    <property type="entry name" value="PS_decarb_PSD_B_type1"/>
    <property type="match status" value="1"/>
</dbReference>
<dbReference type="InterPro" id="IPR003817">
    <property type="entry name" value="PS_Dcarbxylase"/>
</dbReference>
<dbReference type="InterPro" id="IPR033177">
    <property type="entry name" value="PSD-B"/>
</dbReference>
<dbReference type="InterPro" id="IPR033178">
    <property type="entry name" value="PSD_type1_pro"/>
</dbReference>
<dbReference type="NCBIfam" id="NF002853">
    <property type="entry name" value="PRK03140.1"/>
    <property type="match status" value="1"/>
</dbReference>
<dbReference type="NCBIfam" id="TIGR00163">
    <property type="entry name" value="PS_decarb"/>
    <property type="match status" value="1"/>
</dbReference>
<dbReference type="PANTHER" id="PTHR10067">
    <property type="entry name" value="PHOSPHATIDYLSERINE DECARBOXYLASE"/>
    <property type="match status" value="1"/>
</dbReference>
<dbReference type="PANTHER" id="PTHR10067:SF6">
    <property type="entry name" value="PHOSPHATIDYLSERINE DECARBOXYLASE PROENZYME, MITOCHONDRIAL"/>
    <property type="match status" value="1"/>
</dbReference>
<dbReference type="Pfam" id="PF02666">
    <property type="entry name" value="PS_Dcarbxylase"/>
    <property type="match status" value="1"/>
</dbReference>
<keyword id="KW-1003">Cell membrane</keyword>
<keyword id="KW-0210">Decarboxylase</keyword>
<keyword id="KW-0444">Lipid biosynthesis</keyword>
<keyword id="KW-0443">Lipid metabolism</keyword>
<keyword id="KW-0456">Lyase</keyword>
<keyword id="KW-0472">Membrane</keyword>
<keyword id="KW-0594">Phospholipid biosynthesis</keyword>
<keyword id="KW-1208">Phospholipid metabolism</keyword>
<keyword id="KW-0670">Pyruvate</keyword>
<keyword id="KW-0865">Zymogen</keyword>
<sequence length="262" mass="29906">MRRTLYRLMIELTNGRFTSYTLRKFAQSRLSSIIIPSYAKVFQINQDEMEKGLKEYRTLHELFTRKLKEGKRSIDTDASSIVSPVDGVFADHGPIEDTKTFDIKGKRYSIVDMLGNEERAQRYAGGTYMVIYLSPSHYHRIHSPLSGSVTERFVLGRKSYPVNAAGMEYGKEPLSKNYRSVTEVNSDGEHMALVKVGAMFVNSIELLHERDTVQKGEEMAYFTFGSTVVLLFEKDMIEVVQELKSGQELRLGEKIATRLAHK</sequence>
<comment type="function">
    <text evidence="1">Catalyzes the formation of phosphatidylethanolamine (PtdEtn) from phosphatidylserine (PtdSer).</text>
</comment>
<comment type="catalytic activity">
    <reaction evidence="1">
        <text>a 1,2-diacyl-sn-glycero-3-phospho-L-serine + H(+) = a 1,2-diacyl-sn-glycero-3-phosphoethanolamine + CO2</text>
        <dbReference type="Rhea" id="RHEA:20828"/>
        <dbReference type="ChEBI" id="CHEBI:15378"/>
        <dbReference type="ChEBI" id="CHEBI:16526"/>
        <dbReference type="ChEBI" id="CHEBI:57262"/>
        <dbReference type="ChEBI" id="CHEBI:64612"/>
        <dbReference type="EC" id="4.1.1.65"/>
    </reaction>
</comment>
<comment type="cofactor">
    <cofactor evidence="1">
        <name>pyruvate</name>
        <dbReference type="ChEBI" id="CHEBI:15361"/>
    </cofactor>
    <text evidence="1">Binds 1 pyruvoyl group covalently per subunit.</text>
</comment>
<comment type="pathway">
    <text evidence="1">Phospholipid metabolism; phosphatidylethanolamine biosynthesis; phosphatidylethanolamine from CDP-diacylglycerol: step 2/2.</text>
</comment>
<comment type="subunit">
    <text evidence="1">Heterodimer of a large membrane-associated beta subunit and a small pyruvoyl-containing alpha subunit.</text>
</comment>
<comment type="subcellular location">
    <subcellularLocation>
        <location evidence="1">Cell membrane</location>
        <topology evidence="1">Peripheral membrane protein</topology>
    </subcellularLocation>
</comment>
<comment type="PTM">
    <text evidence="1">Is synthesized initially as an inactive proenzyme. Formation of the active enzyme involves a self-maturation process in which the active site pyruvoyl group is generated from an internal serine residue via an autocatalytic post-translational modification. Two non-identical subunits are generated from the proenzyme in this reaction, and the pyruvate is formed at the N-terminus of the alpha chain, which is derived from the carboxyl end of the proenzyme. The autoendoproteolytic cleavage occurs by a canonical serine protease mechanism, in which the side chain hydroxyl group of the serine supplies its oxygen atom to form the C-terminus of the beta chain, while the remainder of the serine residue undergoes an oxidative deamination to produce ammonia and the pyruvoyl prosthetic group on the alpha chain. During this reaction, the Ser that is part of the protease active site of the proenzyme becomes the pyruvoyl prosthetic group, which constitutes an essential element of the active site of the mature decarboxylase.</text>
</comment>
<comment type="similarity">
    <text evidence="1">Belongs to the phosphatidylserine decarboxylase family. PSD-B subfamily. Prokaryotic type I sub-subfamily.</text>
</comment>
<evidence type="ECO:0000255" key="1">
    <source>
        <dbReference type="HAMAP-Rule" id="MF_00662"/>
    </source>
</evidence>
<gene>
    <name evidence="1" type="primary">psd</name>
    <name type="ordered locus">BAA_4583</name>
</gene>
<feature type="chain" id="PRO_1000147589" description="Phosphatidylserine decarboxylase beta chain" evidence="1">
    <location>
        <begin position="1"/>
        <end position="225"/>
    </location>
</feature>
<feature type="chain" id="PRO_1000147590" description="Phosphatidylserine decarboxylase alpha chain" evidence="1">
    <location>
        <begin position="226"/>
        <end position="262"/>
    </location>
</feature>
<feature type="active site" description="Charge relay system; for autoendoproteolytic cleavage activity" evidence="1">
    <location>
        <position position="86"/>
    </location>
</feature>
<feature type="active site" description="Charge relay system; for autoendoproteolytic cleavage activity" evidence="1">
    <location>
        <position position="142"/>
    </location>
</feature>
<feature type="active site" description="Charge relay system; for autoendoproteolytic cleavage activity" evidence="1">
    <location>
        <position position="226"/>
    </location>
</feature>
<feature type="active site" description="Schiff-base intermediate with substrate; via pyruvic acid; for decarboxylase activity" evidence="1">
    <location>
        <position position="226"/>
    </location>
</feature>
<feature type="site" description="Cleavage (non-hydrolytic); by autocatalysis" evidence="1">
    <location>
        <begin position="225"/>
        <end position="226"/>
    </location>
</feature>
<feature type="modified residue" description="Pyruvic acid (Ser); by autocatalysis" evidence="1">
    <location>
        <position position="226"/>
    </location>
</feature>
<protein>
    <recommendedName>
        <fullName evidence="1">Phosphatidylserine decarboxylase proenzyme</fullName>
        <ecNumber evidence="1">4.1.1.65</ecNumber>
    </recommendedName>
    <component>
        <recommendedName>
            <fullName evidence="1">Phosphatidylserine decarboxylase alpha chain</fullName>
        </recommendedName>
    </component>
    <component>
        <recommendedName>
            <fullName evidence="1">Phosphatidylserine decarboxylase beta chain</fullName>
        </recommendedName>
    </component>
</protein>
<name>PSD_BACAA</name>